<reference key="1">
    <citation type="journal article" date="2007" name="Genome Res.">
        <title>Genome characteristics of facultatively symbiotic Frankia sp. strains reflect host range and host plant biogeography.</title>
        <authorList>
            <person name="Normand P."/>
            <person name="Lapierre P."/>
            <person name="Tisa L.S."/>
            <person name="Gogarten J.P."/>
            <person name="Alloisio N."/>
            <person name="Bagnarol E."/>
            <person name="Bassi C.A."/>
            <person name="Berry A.M."/>
            <person name="Bickhart D.M."/>
            <person name="Choisne N."/>
            <person name="Couloux A."/>
            <person name="Cournoyer B."/>
            <person name="Cruveiller S."/>
            <person name="Daubin V."/>
            <person name="Demange N."/>
            <person name="Francino M.P."/>
            <person name="Goltsman E."/>
            <person name="Huang Y."/>
            <person name="Kopp O.R."/>
            <person name="Labarre L."/>
            <person name="Lapidus A."/>
            <person name="Lavire C."/>
            <person name="Marechal J."/>
            <person name="Martinez M."/>
            <person name="Mastronunzio J.E."/>
            <person name="Mullin B.C."/>
            <person name="Niemann J."/>
            <person name="Pujic P."/>
            <person name="Rawnsley T."/>
            <person name="Rouy Z."/>
            <person name="Schenowitz C."/>
            <person name="Sellstedt A."/>
            <person name="Tavares F."/>
            <person name="Tomkins J.P."/>
            <person name="Vallenet D."/>
            <person name="Valverde C."/>
            <person name="Wall L.G."/>
            <person name="Wang Y."/>
            <person name="Medigue C."/>
            <person name="Benson D.R."/>
        </authorList>
    </citation>
    <scope>NUCLEOTIDE SEQUENCE [LARGE SCALE GENOMIC DNA]</scope>
    <source>
        <strain>DSM 45818 / CECT 9043 / HFP020203 / CcI3</strain>
    </source>
</reference>
<accession>Q2J9A8</accession>
<evidence type="ECO:0000255" key="1">
    <source>
        <dbReference type="HAMAP-Rule" id="MF_00444"/>
    </source>
</evidence>
<organism>
    <name type="scientific">Frankia casuarinae (strain DSM 45818 / CECT 9043 / HFP020203 / CcI3)</name>
    <dbReference type="NCBI Taxonomy" id="106370"/>
    <lineage>
        <taxon>Bacteria</taxon>
        <taxon>Bacillati</taxon>
        <taxon>Actinomycetota</taxon>
        <taxon>Actinomycetes</taxon>
        <taxon>Frankiales</taxon>
        <taxon>Frankiaceae</taxon>
        <taxon>Frankia</taxon>
    </lineage>
</organism>
<protein>
    <recommendedName>
        <fullName evidence="1">ATP-dependent Clp protease proteolytic subunit 4</fullName>
        <ecNumber evidence="1">3.4.21.92</ecNumber>
    </recommendedName>
    <alternativeName>
        <fullName evidence="1">Endopeptidase Clp 4</fullName>
    </alternativeName>
</protein>
<keyword id="KW-0963">Cytoplasm</keyword>
<keyword id="KW-0378">Hydrolase</keyword>
<keyword id="KW-0645">Protease</keyword>
<keyword id="KW-1185">Reference proteome</keyword>
<keyword id="KW-0720">Serine protease</keyword>
<comment type="function">
    <text evidence="1">Cleaves peptides in various proteins in a process that requires ATP hydrolysis. Has a chymotrypsin-like activity. Plays a major role in the degradation of misfolded proteins.</text>
</comment>
<comment type="catalytic activity">
    <reaction evidence="1">
        <text>Hydrolysis of proteins to small peptides in the presence of ATP and magnesium. alpha-casein is the usual test substrate. In the absence of ATP, only oligopeptides shorter than five residues are hydrolyzed (such as succinyl-Leu-Tyr-|-NHMec, and Leu-Tyr-Leu-|-Tyr-Trp, in which cleavage of the -Tyr-|-Leu- and -Tyr-|-Trp bonds also occurs).</text>
        <dbReference type="EC" id="3.4.21.92"/>
    </reaction>
</comment>
<comment type="subunit">
    <text evidence="1">Fourteen ClpP subunits assemble into 2 heptameric rings which stack back to back to give a disk-like structure with a central cavity, resembling the structure of eukaryotic proteasomes.</text>
</comment>
<comment type="subcellular location">
    <subcellularLocation>
        <location evidence="1">Cytoplasm</location>
    </subcellularLocation>
</comment>
<comment type="similarity">
    <text evidence="1">Belongs to the peptidase S14 family.</text>
</comment>
<feature type="chain" id="PRO_0000236390" description="ATP-dependent Clp protease proteolytic subunit 4">
    <location>
        <begin position="1"/>
        <end position="238"/>
    </location>
</feature>
<feature type="active site" description="Nucleophile" evidence="1">
    <location>
        <position position="113"/>
    </location>
</feature>
<feature type="active site" evidence="1">
    <location>
        <position position="138"/>
    </location>
</feature>
<proteinExistence type="inferred from homology"/>
<gene>
    <name evidence="1" type="primary">clpP4</name>
    <name type="ordered locus">Francci3_2774</name>
</gene>
<dbReference type="EC" id="3.4.21.92" evidence="1"/>
<dbReference type="EMBL" id="CP000249">
    <property type="protein sequence ID" value="ABD12134.1"/>
    <property type="molecule type" value="Genomic_DNA"/>
</dbReference>
<dbReference type="RefSeq" id="WP_011437164.1">
    <property type="nucleotide sequence ID" value="NZ_LRTJ01000180.1"/>
</dbReference>
<dbReference type="SMR" id="Q2J9A8"/>
<dbReference type="STRING" id="106370.Francci3_2774"/>
<dbReference type="MEROPS" id="S14.008"/>
<dbReference type="KEGG" id="fra:Francci3_2774"/>
<dbReference type="eggNOG" id="COG0740">
    <property type="taxonomic scope" value="Bacteria"/>
</dbReference>
<dbReference type="HOGENOM" id="CLU_058707_4_1_11"/>
<dbReference type="OrthoDB" id="9802800at2"/>
<dbReference type="PhylomeDB" id="Q2J9A8"/>
<dbReference type="Proteomes" id="UP000001937">
    <property type="component" value="Chromosome"/>
</dbReference>
<dbReference type="GO" id="GO:0005737">
    <property type="term" value="C:cytoplasm"/>
    <property type="evidence" value="ECO:0007669"/>
    <property type="project" value="UniProtKB-SubCell"/>
</dbReference>
<dbReference type="GO" id="GO:0009368">
    <property type="term" value="C:endopeptidase Clp complex"/>
    <property type="evidence" value="ECO:0007669"/>
    <property type="project" value="TreeGrafter"/>
</dbReference>
<dbReference type="GO" id="GO:0004176">
    <property type="term" value="F:ATP-dependent peptidase activity"/>
    <property type="evidence" value="ECO:0007669"/>
    <property type="project" value="InterPro"/>
</dbReference>
<dbReference type="GO" id="GO:0051117">
    <property type="term" value="F:ATPase binding"/>
    <property type="evidence" value="ECO:0007669"/>
    <property type="project" value="TreeGrafter"/>
</dbReference>
<dbReference type="GO" id="GO:0004252">
    <property type="term" value="F:serine-type endopeptidase activity"/>
    <property type="evidence" value="ECO:0007669"/>
    <property type="project" value="UniProtKB-UniRule"/>
</dbReference>
<dbReference type="GO" id="GO:0006515">
    <property type="term" value="P:protein quality control for misfolded or incompletely synthesized proteins"/>
    <property type="evidence" value="ECO:0007669"/>
    <property type="project" value="TreeGrafter"/>
</dbReference>
<dbReference type="CDD" id="cd07017">
    <property type="entry name" value="S14_ClpP_2"/>
    <property type="match status" value="1"/>
</dbReference>
<dbReference type="FunFam" id="3.90.226.10:FF:000002">
    <property type="entry name" value="ATP-dependent Clp protease proteolytic subunit"/>
    <property type="match status" value="1"/>
</dbReference>
<dbReference type="Gene3D" id="3.90.226.10">
    <property type="entry name" value="2-enoyl-CoA Hydratase, Chain A, domain 1"/>
    <property type="match status" value="1"/>
</dbReference>
<dbReference type="HAMAP" id="MF_00444">
    <property type="entry name" value="ClpP"/>
    <property type="match status" value="1"/>
</dbReference>
<dbReference type="InterPro" id="IPR001907">
    <property type="entry name" value="ClpP"/>
</dbReference>
<dbReference type="InterPro" id="IPR029045">
    <property type="entry name" value="ClpP/crotonase-like_dom_sf"/>
</dbReference>
<dbReference type="InterPro" id="IPR023562">
    <property type="entry name" value="ClpP/TepA"/>
</dbReference>
<dbReference type="InterPro" id="IPR033135">
    <property type="entry name" value="ClpP_His_AS"/>
</dbReference>
<dbReference type="NCBIfam" id="NF001368">
    <property type="entry name" value="PRK00277.1"/>
    <property type="match status" value="1"/>
</dbReference>
<dbReference type="NCBIfam" id="NF009205">
    <property type="entry name" value="PRK12553.1"/>
    <property type="match status" value="1"/>
</dbReference>
<dbReference type="PANTHER" id="PTHR10381">
    <property type="entry name" value="ATP-DEPENDENT CLP PROTEASE PROTEOLYTIC SUBUNIT"/>
    <property type="match status" value="1"/>
</dbReference>
<dbReference type="PANTHER" id="PTHR10381:SF70">
    <property type="entry name" value="ATP-DEPENDENT CLP PROTEASE PROTEOLYTIC SUBUNIT"/>
    <property type="match status" value="1"/>
</dbReference>
<dbReference type="Pfam" id="PF00574">
    <property type="entry name" value="CLP_protease"/>
    <property type="match status" value="1"/>
</dbReference>
<dbReference type="PRINTS" id="PR00127">
    <property type="entry name" value="CLPPROTEASEP"/>
</dbReference>
<dbReference type="SUPFAM" id="SSF52096">
    <property type="entry name" value="ClpP/crotonase"/>
    <property type="match status" value="1"/>
</dbReference>
<dbReference type="PROSITE" id="PS00382">
    <property type="entry name" value="CLP_PROTEASE_HIS"/>
    <property type="match status" value="1"/>
</dbReference>
<name>CLPP4_FRACC</name>
<sequence>MIESFSRLTQAGPGSPRRATVQAAASGLGSADDQVFSRLLENRIVFLGSVVEDAVANAISAKLLLLAAEDPAADIYLYINSPGGSVSAGMAIYDTMQYVGNDVATVALGLAGSMGQFLLCAGTAGKRYALPHARIMMHQPHGGIGGTAADISIQAEQMLYTKRTLQERIAFHTGQTVEQIETDSDRDRWFTAEEAKEYGLVDHVVVRADQVPSVVSGAGMGLRRAGRTGFGPGGGSGR</sequence>